<comment type="subcellular location">
    <subcellularLocation>
        <location evidence="2">Cell membrane</location>
        <topology evidence="2">Multi-pass membrane protein</topology>
    </subcellularLocation>
</comment>
<organism>
    <name type="scientific">Methanocaldococcus jannaschii (strain ATCC 43067 / DSM 2661 / JAL-1 / JCM 10045 / NBRC 100440)</name>
    <name type="common">Methanococcus jannaschii</name>
    <dbReference type="NCBI Taxonomy" id="243232"/>
    <lineage>
        <taxon>Archaea</taxon>
        <taxon>Methanobacteriati</taxon>
        <taxon>Methanobacteriota</taxon>
        <taxon>Methanomada group</taxon>
        <taxon>Methanococci</taxon>
        <taxon>Methanococcales</taxon>
        <taxon>Methanocaldococcaceae</taxon>
        <taxon>Methanocaldococcus</taxon>
    </lineage>
</organism>
<name>Y1080_METJA</name>
<accession>Q58480</accession>
<evidence type="ECO:0000255" key="1"/>
<evidence type="ECO:0000305" key="2"/>
<feature type="chain" id="PRO_0000107161" description="Uncharacterized protein MJ1080">
    <location>
        <begin position="1"/>
        <end position="135"/>
    </location>
</feature>
<feature type="transmembrane region" description="Helical" evidence="1">
    <location>
        <begin position="12"/>
        <end position="32"/>
    </location>
</feature>
<feature type="transmembrane region" description="Helical" evidence="1">
    <location>
        <begin position="68"/>
        <end position="88"/>
    </location>
</feature>
<feature type="transmembrane region" description="Helical" evidence="1">
    <location>
        <begin position="98"/>
        <end position="118"/>
    </location>
</feature>
<keyword id="KW-1003">Cell membrane</keyword>
<keyword id="KW-0472">Membrane</keyword>
<keyword id="KW-1185">Reference proteome</keyword>
<keyword id="KW-0812">Transmembrane</keyword>
<keyword id="KW-1133">Transmembrane helix</keyword>
<reference key="1">
    <citation type="journal article" date="1996" name="Science">
        <title>Complete genome sequence of the methanogenic archaeon, Methanococcus jannaschii.</title>
        <authorList>
            <person name="Bult C.J."/>
            <person name="White O."/>
            <person name="Olsen G.J."/>
            <person name="Zhou L."/>
            <person name="Fleischmann R.D."/>
            <person name="Sutton G.G."/>
            <person name="Blake J.A."/>
            <person name="FitzGerald L.M."/>
            <person name="Clayton R.A."/>
            <person name="Gocayne J.D."/>
            <person name="Kerlavage A.R."/>
            <person name="Dougherty B.A."/>
            <person name="Tomb J.-F."/>
            <person name="Adams M.D."/>
            <person name="Reich C.I."/>
            <person name="Overbeek R."/>
            <person name="Kirkness E.F."/>
            <person name="Weinstock K.G."/>
            <person name="Merrick J.M."/>
            <person name="Glodek A."/>
            <person name="Scott J.L."/>
            <person name="Geoghagen N.S.M."/>
            <person name="Weidman J.F."/>
            <person name="Fuhrmann J.L."/>
            <person name="Nguyen D."/>
            <person name="Utterback T.R."/>
            <person name="Kelley J.M."/>
            <person name="Peterson J.D."/>
            <person name="Sadow P.W."/>
            <person name="Hanna M.C."/>
            <person name="Cotton M.D."/>
            <person name="Roberts K.M."/>
            <person name="Hurst M.A."/>
            <person name="Kaine B.P."/>
            <person name="Borodovsky M."/>
            <person name="Klenk H.-P."/>
            <person name="Fraser C.M."/>
            <person name="Smith H.O."/>
            <person name="Woese C.R."/>
            <person name="Venter J.C."/>
        </authorList>
    </citation>
    <scope>NUCLEOTIDE SEQUENCE [LARGE SCALE GENOMIC DNA]</scope>
    <source>
        <strain>ATCC 43067 / DSM 2661 / JAL-1 / JCM 10045 / NBRC 100440</strain>
    </source>
</reference>
<sequence length="135" mass="15437">MEGKIMNIKHKIPILLLVLYIALGVFIQYNGISEFKSLPSPIYGGDYYYQMGVIWHIRDGGNPLESSSMIGGMPGYLPLYAYLCAKFCDLLNLDTMKGILYFSVVLFIMTSVIWFYLFRVLFKDDWVALIEVVLA</sequence>
<gene>
    <name type="ordered locus">MJ1080</name>
</gene>
<proteinExistence type="predicted"/>
<protein>
    <recommendedName>
        <fullName>Uncharacterized protein MJ1080</fullName>
    </recommendedName>
</protein>
<dbReference type="EMBL" id="L77117">
    <property type="protein sequence ID" value="AAB99094.1"/>
    <property type="molecule type" value="Genomic_DNA"/>
</dbReference>
<dbReference type="PIR" id="G64434">
    <property type="entry name" value="G64434"/>
</dbReference>
<dbReference type="STRING" id="243232.MJ_1080"/>
<dbReference type="PaxDb" id="243232-MJ_1080"/>
<dbReference type="EnsemblBacteria" id="AAB99094">
    <property type="protein sequence ID" value="AAB99094"/>
    <property type="gene ID" value="MJ_1080"/>
</dbReference>
<dbReference type="KEGG" id="mja:MJ_1080"/>
<dbReference type="eggNOG" id="arCOG00563">
    <property type="taxonomic scope" value="Archaea"/>
</dbReference>
<dbReference type="HOGENOM" id="CLU_1881087_0_0_2"/>
<dbReference type="InParanoid" id="Q58480"/>
<dbReference type="Proteomes" id="UP000000805">
    <property type="component" value="Chromosome"/>
</dbReference>
<dbReference type="GO" id="GO:0005886">
    <property type="term" value="C:plasma membrane"/>
    <property type="evidence" value="ECO:0007669"/>
    <property type="project" value="UniProtKB-SubCell"/>
</dbReference>